<accession>P83477</accession>
<keyword id="KW-0930">Antiviral protein</keyword>
<keyword id="KW-0903">Direct protein sequencing</keyword>
<dbReference type="GO" id="GO:0050688">
    <property type="term" value="P:regulation of defense response to virus"/>
    <property type="evidence" value="ECO:0007669"/>
    <property type="project" value="UniProtKB-KW"/>
</dbReference>
<comment type="miscellaneous">
    <text>Has antiviral activity against Tobacco mosaic virus and antitumor activity against stomach cancer cells in vitro.</text>
</comment>
<proteinExistence type="evidence at protein level"/>
<sequence length="20" mass="2237">VYINKLTPPCGTMYYACEAV</sequence>
<feature type="chain" id="PRO_0000064652" description="Antiviral protein Y3">
    <location>
        <begin position="1" status="less than"/>
        <end position="20" status="greater than"/>
    </location>
</feature>
<feature type="non-terminal residue">
    <location>
        <position position="1"/>
    </location>
</feature>
<feature type="non-terminal residue">
    <location>
        <position position="20"/>
    </location>
</feature>
<reference key="1">
    <citation type="submission" date="2002-10" db="UniProtKB">
        <authorList>
            <person name="Wu L.-P."/>
            <person name="Wu Z.-J."/>
            <person name="Lin Q.-Y."/>
            <person name="Xie L.-H."/>
        </authorList>
    </citation>
    <scope>PROTEIN SEQUENCE</scope>
</reference>
<name>APY3_PLECI</name>
<organism>
    <name type="scientific">Pleurotus citrinopileatus</name>
    <name type="common">Golden oyster mushroom</name>
    <dbReference type="NCBI Taxonomy" id="98342"/>
    <lineage>
        <taxon>Eukaryota</taxon>
        <taxon>Fungi</taxon>
        <taxon>Dikarya</taxon>
        <taxon>Basidiomycota</taxon>
        <taxon>Agaricomycotina</taxon>
        <taxon>Agaricomycetes</taxon>
        <taxon>Agaricomycetidae</taxon>
        <taxon>Agaricales</taxon>
        <taxon>Pleurotineae</taxon>
        <taxon>Pleurotaceae</taxon>
        <taxon>Pleurotus</taxon>
    </lineage>
</organism>
<protein>
    <recommendedName>
        <fullName>Antiviral protein Y3</fullName>
    </recommendedName>
</protein>